<comment type="function">
    <text evidence="6">Anion transporter that carries out the exchange of divalent oxalate with monovalent formate, the product of oxalate decarboxylation, at the plasma membrane, and in doing so catalyzes the vectorial portion of a proton-motive metabolic cycle that drives ATP synthesis.</text>
</comment>
<comment type="subunit">
    <text evidence="8">Monomer.</text>
</comment>
<comment type="subcellular location">
    <subcellularLocation>
        <location evidence="3 5 6 7">Cell inner membrane</location>
        <topology evidence="3 5 6 7">Multi-pass membrane protein</topology>
    </subcellularLocation>
</comment>
<comment type="domain">
    <text evidence="4">The protein has a two-fold symmetry axis, with a central cavity which may be associated with substrate transport. Residues contributed from seven transmembrane helices probably line the substrate transport pathway.</text>
</comment>
<comment type="miscellaneous">
    <text evidence="9">Its velocity of transport is the highest one known so far among transporters of organic molecules.</text>
</comment>
<comment type="similarity">
    <text evidence="8">Belongs to the major facilitator superfamily. OFA (TC 2.A.1.11) family.</text>
</comment>
<proteinExistence type="evidence at protein level"/>
<accession>Q51330</accession>
<organism>
    <name type="scientific">Oxalobacter formigenes</name>
    <dbReference type="NCBI Taxonomy" id="847"/>
    <lineage>
        <taxon>Bacteria</taxon>
        <taxon>Pseudomonadati</taxon>
        <taxon>Pseudomonadota</taxon>
        <taxon>Betaproteobacteria</taxon>
        <taxon>Burkholderiales</taxon>
        <taxon>Oxalobacteraceae</taxon>
        <taxon>Oxalobacter</taxon>
    </lineage>
</organism>
<dbReference type="EMBL" id="U40075">
    <property type="protein sequence ID" value="AAC43722.1"/>
    <property type="molecule type" value="Genomic_DNA"/>
</dbReference>
<dbReference type="PIR" id="T47239">
    <property type="entry name" value="T47239"/>
</dbReference>
<dbReference type="RefSeq" id="WP_005881678.1">
    <property type="nucleotide sequence ID" value="NZ_JAMKYJ010000016.1"/>
</dbReference>
<dbReference type="PDB" id="8HPJ">
    <property type="method" value="X-ray"/>
    <property type="resolution" value="3.30 A"/>
    <property type="chains" value="A/D=1-418"/>
</dbReference>
<dbReference type="PDB" id="8HPK">
    <property type="method" value="X-ray"/>
    <property type="resolution" value="3.00 A"/>
    <property type="chains" value="A=1-418"/>
</dbReference>
<dbReference type="PDBsum" id="8HPJ"/>
<dbReference type="PDBsum" id="8HPK"/>
<dbReference type="SMR" id="Q51330"/>
<dbReference type="TCDB" id="2.A.1.11.1">
    <property type="family name" value="the major facilitator superfamily (mfs)"/>
</dbReference>
<dbReference type="GeneID" id="77134496"/>
<dbReference type="KEGG" id="ofo:BRW83_0588"/>
<dbReference type="BioCyc" id="MetaCyc:MONOMER-16176"/>
<dbReference type="GO" id="GO:0005886">
    <property type="term" value="C:plasma membrane"/>
    <property type="evidence" value="ECO:0007669"/>
    <property type="project" value="UniProtKB-SubCell"/>
</dbReference>
<dbReference type="GO" id="GO:0015297">
    <property type="term" value="F:antiporter activity"/>
    <property type="evidence" value="ECO:0007669"/>
    <property type="project" value="UniProtKB-KW"/>
</dbReference>
<dbReference type="GO" id="GO:0019531">
    <property type="term" value="F:oxalate transmembrane transporter activity"/>
    <property type="evidence" value="ECO:0007669"/>
    <property type="project" value="InterPro"/>
</dbReference>
<dbReference type="GO" id="GO:0006811">
    <property type="term" value="P:monoatomic ion transport"/>
    <property type="evidence" value="ECO:0007669"/>
    <property type="project" value="UniProtKB-KW"/>
</dbReference>
<dbReference type="CDD" id="cd17314">
    <property type="entry name" value="MFS_MCT_like"/>
    <property type="match status" value="1"/>
</dbReference>
<dbReference type="Gene3D" id="1.20.1250.20">
    <property type="entry name" value="MFS general substrate transporter like domains"/>
    <property type="match status" value="2"/>
</dbReference>
<dbReference type="InterPro" id="IPR011701">
    <property type="entry name" value="MFS"/>
</dbReference>
<dbReference type="InterPro" id="IPR020846">
    <property type="entry name" value="MFS_dom"/>
</dbReference>
<dbReference type="InterPro" id="IPR052983">
    <property type="entry name" value="MFS_Riboflavin_Transporter"/>
</dbReference>
<dbReference type="InterPro" id="IPR036259">
    <property type="entry name" value="MFS_trans_sf"/>
</dbReference>
<dbReference type="InterPro" id="IPR026355">
    <property type="entry name" value="Oxa/Form_antiport"/>
</dbReference>
<dbReference type="InterPro" id="IPR004741">
    <property type="entry name" value="Oxa_For_antiport_fam_transptr"/>
</dbReference>
<dbReference type="NCBIfam" id="TIGR00890">
    <property type="entry name" value="2A0111"/>
    <property type="match status" value="1"/>
</dbReference>
<dbReference type="NCBIfam" id="TIGR04259">
    <property type="entry name" value="oxa_formateAnti"/>
    <property type="match status" value="1"/>
</dbReference>
<dbReference type="PANTHER" id="PTHR43385">
    <property type="entry name" value="RIBOFLAVIN TRANSPORTER RIBJ"/>
    <property type="match status" value="1"/>
</dbReference>
<dbReference type="PANTHER" id="PTHR43385:SF1">
    <property type="entry name" value="RIBOFLAVIN TRANSPORTER RIBJ"/>
    <property type="match status" value="1"/>
</dbReference>
<dbReference type="Pfam" id="PF07690">
    <property type="entry name" value="MFS_1"/>
    <property type="match status" value="1"/>
</dbReference>
<dbReference type="SUPFAM" id="SSF103473">
    <property type="entry name" value="MFS general substrate transporter"/>
    <property type="match status" value="1"/>
</dbReference>
<dbReference type="PROSITE" id="PS50850">
    <property type="entry name" value="MFS"/>
    <property type="match status" value="1"/>
</dbReference>
<reference key="1">
    <citation type="journal article" date="1996" name="J. Biol. Chem.">
        <title>Cloning, sequencing and expression in Escherichia coli of OxlT, the oxalate:formate exchange protein of Oxalobacter formigenes.</title>
        <authorList>
            <person name="Abe K."/>
            <person name="Ruan Z.-S."/>
            <person name="Maloney P.C."/>
        </authorList>
    </citation>
    <scope>NUCLEOTIDE SEQUENCE [GENOMIC DNA]</scope>
    <scope>PROTEIN SEQUENCE OF 2-21</scope>
    <scope>FUNCTION</scope>
    <scope>SUBCELLULAR LOCATION</scope>
    <source>
        <strain>OxB</strain>
    </source>
</reference>
<reference key="2">
    <citation type="journal article" date="1998" name="J. Biol. Chem.">
        <title>Structure-function relationships in OxlT, the oxalate/formate transporter of Oxalobacter formigenes. Topological features of transmembrane helix 11 as visualized by site-directed fluorescent labeling.</title>
        <authorList>
            <person name="Fu D."/>
            <person name="Maloney P.C."/>
        </authorList>
    </citation>
    <scope>SUBCELLULAR LOCATION</scope>
    <scope>TOPOLOGY</scope>
    <scope>MUTAGENESIS OF CYS-28; CYS-271; GLY-349; LYS-355; GLY-362 AND GLY-363</scope>
    <source>
        <strain>OxB</strain>
    </source>
</reference>
<reference key="3">
    <citation type="journal article" date="2002" name="J. Biol. Chem.">
        <title>Structure/function relationships in OxlT, the oxalate/formate antiporter of Oxalobacter formigenes. Assignment of transmembrane helix 2 to the translocation pathway.</title>
        <authorList>
            <person name="Ye L."/>
            <person name="Maloney P.C."/>
        </authorList>
    </citation>
    <scope>SUBCELLULAR LOCATION</scope>
    <scope>TOPOLOGY</scope>
    <scope>MUTAGENESIS OF GLN-56; PHE-59; GLN-66 AND SER-69</scope>
    <source>
        <strain>OxB</strain>
    </source>
</reference>
<reference key="4">
    <citation type="journal article" date="2001" name="J. Biol. Chem.">
        <title>Structure/function relationships in OxlT, the oxalate-formate transporter of Oxalobacter formigenes. Assignment of transmembrane helix 11 to the translocation pathway.</title>
        <authorList>
            <person name="Fu D."/>
            <person name="Sarker R.I."/>
            <person name="Abe K."/>
            <person name="Bolton E."/>
            <person name="Maloney P.C."/>
        </authorList>
    </citation>
    <scope>STRUCTURAL CHARACTERIZATION</scope>
    <scope>MUTAGENESIS OF LYS-355</scope>
    <source>
        <strain>OxB</strain>
    </source>
</reference>
<reference key="5">
    <citation type="journal article" date="2001" name="J. Bacteriol.">
        <title>Topology of OxlT, the oxalate transporter of Oxalobacter formigenes, determined by site-directed fluorescence labeling.</title>
        <authorList>
            <person name="Ye L."/>
            <person name="Jia Z."/>
            <person name="Jung T."/>
            <person name="Maloney P.C."/>
        </authorList>
    </citation>
    <scope>SUBCELLULAR LOCATION</scope>
    <scope>TOPOLOGY</scope>
    <source>
        <strain>OxB</strain>
    </source>
</reference>
<reference key="6">
    <citation type="journal article" date="2001" name="EMBO J.">
        <title>Projection structure and molecular architecture of OxlT, a bacterial membrane transporter.</title>
        <authorList>
            <person name="Heymann J.A.W."/>
            <person name="Sarker R."/>
            <person name="Hirai T."/>
            <person name="Shi D."/>
            <person name="Milne J.L.S."/>
            <person name="Maloney P.C."/>
            <person name="Subramaniam S."/>
        </authorList>
    </citation>
    <scope>CRYSTALLIZATION</scope>
    <scope>DOMAIN</scope>
    <source>
        <strain>OxB</strain>
    </source>
</reference>
<protein>
    <recommendedName>
        <fullName>Oxalate:formate antiporter</fullName>
        <shortName>OFA</shortName>
    </recommendedName>
    <alternativeName>
        <fullName>Oxalate:formate antiport protein</fullName>
    </alternativeName>
    <alternativeName>
        <fullName>Oxalate:formate exchange protein</fullName>
    </alternativeName>
</protein>
<feature type="initiator methionine" description="Removed" evidence="6">
    <location>
        <position position="1"/>
    </location>
</feature>
<feature type="chain" id="PRO_0000173450" description="Oxalate:formate antiporter">
    <location>
        <begin position="2"/>
        <end position="418"/>
    </location>
</feature>
<feature type="transmembrane region" description="Helical" evidence="1">
    <location>
        <begin position="17"/>
        <end position="37"/>
    </location>
</feature>
<feature type="transmembrane region" description="Helical" evidence="1">
    <location>
        <begin position="48"/>
        <end position="68"/>
    </location>
</feature>
<feature type="transmembrane region" description="Helical" evidence="1">
    <location>
        <begin position="84"/>
        <end position="104"/>
    </location>
</feature>
<feature type="transmembrane region" description="Helical" evidence="1">
    <location>
        <begin position="108"/>
        <end position="128"/>
    </location>
</feature>
<feature type="transmembrane region" description="Helical" evidence="1">
    <location>
        <begin position="141"/>
        <end position="161"/>
    </location>
</feature>
<feature type="transmembrane region" description="Helical" evidence="1">
    <location>
        <begin position="172"/>
        <end position="192"/>
    </location>
</feature>
<feature type="transmembrane region" description="Helical" evidence="1">
    <location>
        <begin position="222"/>
        <end position="242"/>
    </location>
</feature>
<feature type="transmembrane region" description="Helical" evidence="1">
    <location>
        <begin position="250"/>
        <end position="270"/>
    </location>
</feature>
<feature type="transmembrane region" description="Helical" evidence="1">
    <location>
        <begin position="288"/>
        <end position="308"/>
    </location>
</feature>
<feature type="transmembrane region" description="Helical" evidence="1">
    <location>
        <begin position="311"/>
        <end position="331"/>
    </location>
</feature>
<feature type="transmembrane region" description="Helical" evidence="1">
    <location>
        <begin position="350"/>
        <end position="370"/>
    </location>
</feature>
<feature type="transmembrane region" description="Helical" evidence="1">
    <location>
        <begin position="378"/>
        <end position="398"/>
    </location>
</feature>
<feature type="binding site" evidence="1">
    <location>
        <position position="355"/>
    </location>
    <ligand>
        <name>oxalate</name>
        <dbReference type="ChEBI" id="CHEBI:30623"/>
    </ligand>
</feature>
<feature type="mutagenesis site" description="Slight decrease in activity; when associated with A-271." evidence="7">
    <original>C</original>
    <variation>G</variation>
    <location>
        <position position="28"/>
    </location>
</feature>
<feature type="mutagenesis site" description="Residual activity." evidence="5">
    <original>Q</original>
    <variation>C</variation>
    <location>
        <position position="56"/>
    </location>
</feature>
<feature type="mutagenesis site" description="Loss of activity." evidence="5">
    <original>F</original>
    <variation>C</variation>
    <location>
        <position position="59"/>
    </location>
</feature>
<feature type="mutagenesis site" description="Residual activity." evidence="5">
    <original>Q</original>
    <variation>C</variation>
    <location>
        <position position="66"/>
    </location>
</feature>
<feature type="mutagenesis site" description="Residual activity." evidence="5">
    <original>S</original>
    <variation>C</variation>
    <location>
        <position position="69"/>
    </location>
</feature>
<feature type="mutagenesis site" description="Slight decrease in activity; when associated with G-28." evidence="7">
    <original>C</original>
    <variation>A</variation>
    <location>
        <position position="271"/>
    </location>
</feature>
<feature type="mutagenesis site" description="Loss of activity." evidence="7">
    <original>G</original>
    <variation>C</variation>
    <location>
        <position position="349"/>
    </location>
</feature>
<feature type="mutagenesis site" description="Residual activity.">
    <original>A</original>
    <variation>C</variation>
    <location>
        <position position="354"/>
    </location>
</feature>
<feature type="mutagenesis site" description="Loss of activity." evidence="2 7">
    <original>K</original>
    <variation>C</variation>
    <variation>G</variation>
    <variation>Q</variation>
    <variation>T</variation>
    <location>
        <position position="355"/>
    </location>
</feature>
<feature type="mutagenesis site" description="Residual activity." evidence="2 7">
    <original>K</original>
    <variation>R</variation>
    <location>
        <position position="355"/>
    </location>
</feature>
<feature type="mutagenesis site" description="Residual activity." evidence="7">
    <original>G</original>
    <variation>C</variation>
    <location>
        <position position="362"/>
    </location>
</feature>
<feature type="mutagenesis site" description="Residual activity." evidence="7">
    <original>G</original>
    <variation>C</variation>
    <location>
        <position position="363"/>
    </location>
</feature>
<feature type="helix" evidence="11">
    <location>
        <begin position="16"/>
        <end position="35"/>
    </location>
</feature>
<feature type="helix" evidence="11">
    <location>
        <begin position="37"/>
        <end position="48"/>
    </location>
</feature>
<feature type="helix" evidence="11">
    <location>
        <begin position="52"/>
        <end position="80"/>
    </location>
</feature>
<feature type="helix" evidence="11">
    <location>
        <begin position="83"/>
        <end position="98"/>
    </location>
</feature>
<feature type="helix" evidence="11">
    <location>
        <begin position="99"/>
        <end position="101"/>
    </location>
</feature>
<feature type="helix" evidence="11">
    <location>
        <begin position="106"/>
        <end position="134"/>
    </location>
</feature>
<feature type="strand" evidence="10">
    <location>
        <begin position="136"/>
        <end position="138"/>
    </location>
</feature>
<feature type="helix" evidence="11">
    <location>
        <begin position="139"/>
        <end position="152"/>
    </location>
</feature>
<feature type="helix" evidence="11">
    <location>
        <begin position="154"/>
        <end position="167"/>
    </location>
</feature>
<feature type="helix" evidence="11">
    <location>
        <begin position="170"/>
        <end position="191"/>
    </location>
</feature>
<feature type="helix" evidence="11">
    <location>
        <begin position="213"/>
        <end position="218"/>
    </location>
</feature>
<feature type="helix" evidence="11">
    <location>
        <begin position="220"/>
        <end position="250"/>
    </location>
</feature>
<feature type="helix" evidence="11">
    <location>
        <begin position="254"/>
        <end position="281"/>
    </location>
</feature>
<feature type="helix" evidence="11">
    <location>
        <begin position="284"/>
        <end position="306"/>
    </location>
</feature>
<feature type="helix" evidence="11">
    <location>
        <begin position="310"/>
        <end position="338"/>
    </location>
</feature>
<feature type="helix" evidence="11">
    <location>
        <begin position="344"/>
        <end position="362"/>
    </location>
</feature>
<feature type="helix" evidence="11">
    <location>
        <begin position="364"/>
        <end position="373"/>
    </location>
</feature>
<feature type="helix" evidence="11">
    <location>
        <begin position="375"/>
        <end position="394"/>
    </location>
</feature>
<feature type="helix" evidence="11">
    <location>
        <begin position="397"/>
        <end position="399"/>
    </location>
</feature>
<evidence type="ECO:0000255" key="1"/>
<evidence type="ECO:0000269" key="2">
    <source>
    </source>
</evidence>
<evidence type="ECO:0000269" key="3">
    <source>
    </source>
</evidence>
<evidence type="ECO:0000269" key="4">
    <source>
    </source>
</evidence>
<evidence type="ECO:0000269" key="5">
    <source>
    </source>
</evidence>
<evidence type="ECO:0000269" key="6">
    <source>
    </source>
</evidence>
<evidence type="ECO:0000269" key="7">
    <source>
    </source>
</evidence>
<evidence type="ECO:0000305" key="8"/>
<evidence type="ECO:0000305" key="9">
    <source>
    </source>
</evidence>
<evidence type="ECO:0007829" key="10">
    <source>
        <dbReference type="PDB" id="8HPJ"/>
    </source>
</evidence>
<evidence type="ECO:0007829" key="11">
    <source>
        <dbReference type="PDB" id="8HPK"/>
    </source>
</evidence>
<name>OXLT_OXAFO</name>
<sequence length="418" mass="44517">MNNPQTGQSTGLLGNRWFYLVLAVLLMCMISGVQYSWTLYANPVKDNLGVSLAAVQTAFTLSQVIQAGSQPGGGYFVDKFGPRIPLMFGGAMVLAGWTFMGMVDSVPALYALYTLAGAGVGIVYGIAMNTANRWFPDKRGLASGFTAAGYGLGVLPFLPLISSVLKVEGVGAAFMYTGLIMGILIILIAFVIRFPGQQGAKKQIVVTDKDFNSGEMLRTPQFWVLWTAFFSVNFGGLLLVANSVPYGRSLGLAAGVLTIGVSIQNLFNGGCRPFWGFVSDKIGRYKTMSVVFGINAVVLALFPTIAALGDVAFIAMLAIAFFTWGGSYALFPSTNSDIFGTAYSARNYGFFWAAKATASIFGGGLGAAIATNFGWNTAFLITAITSFIAFALATFVIPRMGRPVKKMVKLSPEEKAVH</sequence>
<gene>
    <name type="primary">oxlT</name>
</gene>
<keyword id="KW-0002">3D-structure</keyword>
<keyword id="KW-0050">Antiport</keyword>
<keyword id="KW-0997">Cell inner membrane</keyword>
<keyword id="KW-1003">Cell membrane</keyword>
<keyword id="KW-0903">Direct protein sequencing</keyword>
<keyword id="KW-0406">Ion transport</keyword>
<keyword id="KW-0472">Membrane</keyword>
<keyword id="KW-0812">Transmembrane</keyword>
<keyword id="KW-1133">Transmembrane helix</keyword>
<keyword id="KW-0813">Transport</keyword>